<feature type="chain" id="PRO_0000106971" description="Uncharacterized protein MJ0647">
    <location>
        <begin position="1"/>
        <end position="71"/>
    </location>
</feature>
<feature type="region of interest" description="Disordered" evidence="1">
    <location>
        <begin position="1"/>
        <end position="20"/>
    </location>
</feature>
<name>Y647_METJA</name>
<accession>Q58063</accession>
<keyword id="KW-1185">Reference proteome</keyword>
<evidence type="ECO:0000256" key="1">
    <source>
        <dbReference type="SAM" id="MobiDB-lite"/>
    </source>
</evidence>
<gene>
    <name type="ordered locus">MJ0647</name>
</gene>
<organism>
    <name type="scientific">Methanocaldococcus jannaschii (strain ATCC 43067 / DSM 2661 / JAL-1 / JCM 10045 / NBRC 100440)</name>
    <name type="common">Methanococcus jannaschii</name>
    <dbReference type="NCBI Taxonomy" id="243232"/>
    <lineage>
        <taxon>Archaea</taxon>
        <taxon>Methanobacteriati</taxon>
        <taxon>Methanobacteriota</taxon>
        <taxon>Methanomada group</taxon>
        <taxon>Methanococci</taxon>
        <taxon>Methanococcales</taxon>
        <taxon>Methanocaldococcaceae</taxon>
        <taxon>Methanocaldococcus</taxon>
    </lineage>
</organism>
<reference key="1">
    <citation type="journal article" date="1996" name="Science">
        <title>Complete genome sequence of the methanogenic archaeon, Methanococcus jannaschii.</title>
        <authorList>
            <person name="Bult C.J."/>
            <person name="White O."/>
            <person name="Olsen G.J."/>
            <person name="Zhou L."/>
            <person name="Fleischmann R.D."/>
            <person name="Sutton G.G."/>
            <person name="Blake J.A."/>
            <person name="FitzGerald L.M."/>
            <person name="Clayton R.A."/>
            <person name="Gocayne J.D."/>
            <person name="Kerlavage A.R."/>
            <person name="Dougherty B.A."/>
            <person name="Tomb J.-F."/>
            <person name="Adams M.D."/>
            <person name="Reich C.I."/>
            <person name="Overbeek R."/>
            <person name="Kirkness E.F."/>
            <person name="Weinstock K.G."/>
            <person name="Merrick J.M."/>
            <person name="Glodek A."/>
            <person name="Scott J.L."/>
            <person name="Geoghagen N.S.M."/>
            <person name="Weidman J.F."/>
            <person name="Fuhrmann J.L."/>
            <person name="Nguyen D."/>
            <person name="Utterback T.R."/>
            <person name="Kelley J.M."/>
            <person name="Peterson J.D."/>
            <person name="Sadow P.W."/>
            <person name="Hanna M.C."/>
            <person name="Cotton M.D."/>
            <person name="Roberts K.M."/>
            <person name="Hurst M.A."/>
            <person name="Kaine B.P."/>
            <person name="Borodovsky M."/>
            <person name="Klenk H.-P."/>
            <person name="Fraser C.M."/>
            <person name="Smith H.O."/>
            <person name="Woese C.R."/>
            <person name="Venter J.C."/>
        </authorList>
    </citation>
    <scope>NUCLEOTIDE SEQUENCE [LARGE SCALE GENOMIC DNA]</scope>
    <source>
        <strain>ATCC 43067 / DSM 2661 / JAL-1 / JCM 10045 / NBRC 100440</strain>
    </source>
</reference>
<sequence length="71" mass="8606">MQKLNKHLKKKKQKRKKMKKKLNNEFQEVIDFLKSLPEGRRVYIEMSGIWIEVTKEEAINYLKSKINEKEA</sequence>
<protein>
    <recommendedName>
        <fullName>Uncharacterized protein MJ0647</fullName>
    </recommendedName>
</protein>
<dbReference type="EMBL" id="L77117">
    <property type="protein sequence ID" value="AAB98645.1"/>
    <property type="molecule type" value="Genomic_DNA"/>
</dbReference>
<dbReference type="PIR" id="G64380">
    <property type="entry name" value="G64380"/>
</dbReference>
<dbReference type="SMR" id="Q58063"/>
<dbReference type="FunCoup" id="Q58063">
    <property type="interactions" value="1"/>
</dbReference>
<dbReference type="STRING" id="243232.MJ_0647"/>
<dbReference type="PaxDb" id="243232-MJ_0647"/>
<dbReference type="EnsemblBacteria" id="AAB98645">
    <property type="protein sequence ID" value="AAB98645"/>
    <property type="gene ID" value="MJ_0647"/>
</dbReference>
<dbReference type="KEGG" id="mja:MJ_0647"/>
<dbReference type="eggNOG" id="arCOG09669">
    <property type="taxonomic scope" value="Archaea"/>
</dbReference>
<dbReference type="HOGENOM" id="CLU_202275_0_0_2"/>
<dbReference type="InParanoid" id="Q58063"/>
<dbReference type="OrthoDB" id="65978at2157"/>
<dbReference type="Proteomes" id="UP000000805">
    <property type="component" value="Chromosome"/>
</dbReference>
<dbReference type="GO" id="GO:0016272">
    <property type="term" value="C:prefoldin complex"/>
    <property type="evidence" value="ECO:0007669"/>
    <property type="project" value="InterPro"/>
</dbReference>
<dbReference type="GO" id="GO:0051082">
    <property type="term" value="F:unfolded protein binding"/>
    <property type="evidence" value="ECO:0007669"/>
    <property type="project" value="InterPro"/>
</dbReference>
<dbReference type="GO" id="GO:0006457">
    <property type="term" value="P:protein folding"/>
    <property type="evidence" value="ECO:0007669"/>
    <property type="project" value="InterPro"/>
</dbReference>
<dbReference type="Gene3D" id="1.10.287.370">
    <property type="match status" value="1"/>
</dbReference>
<dbReference type="InterPro" id="IPR002777">
    <property type="entry name" value="PFD_beta-like"/>
</dbReference>
<dbReference type="InterPro" id="IPR009053">
    <property type="entry name" value="Prefoldin"/>
</dbReference>
<dbReference type="Pfam" id="PF01920">
    <property type="entry name" value="Prefoldin_2"/>
    <property type="match status" value="1"/>
</dbReference>
<dbReference type="SUPFAM" id="SSF46579">
    <property type="entry name" value="Prefoldin"/>
    <property type="match status" value="1"/>
</dbReference>
<proteinExistence type="predicted"/>